<sequence>MSFTVVIPARYQSTRLPGKPLADIGGKPMIQWVYEQAMQAGADRVIIATDDERVEQAVQAFGGVVCMTSPNHQSGTERLAEVVAKMAIPADHIVVNVQGDEPLIPPAIIRQVADNLAACSAPMATLAVEIEDEAEVFNPNAVKVITDKSGYALYFSRATIPWDRDNFAKADKAIVQPLLRHIGIYAYRAGFINTYLDWQPSQLEKIECLEQLRVLWHGEKIHVAVALEAPPAGVDTPEDLEVVRRIVAERAQ</sequence>
<gene>
    <name evidence="1" type="primary">kdsB</name>
    <name type="ordered locus">VC_1875</name>
</gene>
<organism>
    <name type="scientific">Vibrio cholerae serotype O1 (strain ATCC 39315 / El Tor Inaba N16961)</name>
    <dbReference type="NCBI Taxonomy" id="243277"/>
    <lineage>
        <taxon>Bacteria</taxon>
        <taxon>Pseudomonadati</taxon>
        <taxon>Pseudomonadota</taxon>
        <taxon>Gammaproteobacteria</taxon>
        <taxon>Vibrionales</taxon>
        <taxon>Vibrionaceae</taxon>
        <taxon>Vibrio</taxon>
    </lineage>
</organism>
<feature type="chain" id="PRO_0000188517" description="3-deoxy-manno-octulosonate cytidylyltransferase">
    <location>
        <begin position="1"/>
        <end position="252"/>
    </location>
</feature>
<feature type="strand" evidence="2">
    <location>
        <begin position="3"/>
        <end position="8"/>
    </location>
</feature>
<feature type="strand" evidence="2">
    <location>
        <begin position="14"/>
        <end position="16"/>
    </location>
</feature>
<feature type="helix" evidence="2">
    <location>
        <begin position="19"/>
        <end position="21"/>
    </location>
</feature>
<feature type="helix" evidence="2">
    <location>
        <begin position="29"/>
        <end position="39"/>
    </location>
</feature>
<feature type="strand" evidence="2">
    <location>
        <begin position="43"/>
        <end position="50"/>
    </location>
</feature>
<feature type="helix" evidence="2">
    <location>
        <begin position="52"/>
        <end position="60"/>
    </location>
</feature>
<feature type="strand" evidence="2">
    <location>
        <begin position="64"/>
        <end position="67"/>
    </location>
</feature>
<feature type="helix" evidence="2">
    <location>
        <begin position="75"/>
        <end position="85"/>
    </location>
</feature>
<feature type="strand" evidence="2">
    <location>
        <begin position="92"/>
        <end position="96"/>
    </location>
</feature>
<feature type="helix" evidence="2">
    <location>
        <begin position="106"/>
        <end position="118"/>
    </location>
</feature>
<feature type="strand" evidence="2">
    <location>
        <begin position="122"/>
        <end position="130"/>
    </location>
</feature>
<feature type="helix" evidence="2">
    <location>
        <begin position="133"/>
        <end position="136"/>
    </location>
</feature>
<feature type="strand" evidence="2">
    <location>
        <begin position="143"/>
        <end position="146"/>
    </location>
</feature>
<feature type="strand" evidence="2">
    <location>
        <begin position="150"/>
        <end position="158"/>
    </location>
</feature>
<feature type="helix" evidence="2">
    <location>
        <begin position="164"/>
        <end position="168"/>
    </location>
</feature>
<feature type="strand" evidence="2">
    <location>
        <begin position="169"/>
        <end position="171"/>
    </location>
</feature>
<feature type="strand" evidence="2">
    <location>
        <begin position="178"/>
        <end position="188"/>
    </location>
</feature>
<feature type="helix" evidence="2">
    <location>
        <begin position="191"/>
        <end position="197"/>
    </location>
</feature>
<feature type="helix" evidence="2">
    <location>
        <begin position="202"/>
        <end position="207"/>
    </location>
</feature>
<feature type="helix" evidence="2">
    <location>
        <begin position="212"/>
        <end position="216"/>
    </location>
</feature>
<feature type="strand" evidence="2">
    <location>
        <begin position="221"/>
        <end position="225"/>
    </location>
</feature>
<feature type="helix" evidence="2">
    <location>
        <begin position="237"/>
        <end position="249"/>
    </location>
</feature>
<dbReference type="EC" id="2.7.7.38" evidence="1"/>
<dbReference type="EMBL" id="AE003852">
    <property type="protein sequence ID" value="AAF95023.1"/>
    <property type="molecule type" value="Genomic_DNA"/>
</dbReference>
<dbReference type="PIR" id="A82146">
    <property type="entry name" value="A82146"/>
</dbReference>
<dbReference type="RefSeq" id="NP_231509.1">
    <property type="nucleotide sequence ID" value="NC_002505.1"/>
</dbReference>
<dbReference type="RefSeq" id="WP_000011329.1">
    <property type="nucleotide sequence ID" value="NZ_LT906614.1"/>
</dbReference>
<dbReference type="PDB" id="3OAM">
    <property type="method" value="X-ray"/>
    <property type="resolution" value="1.75 A"/>
    <property type="chains" value="A/B/C/D=1-252"/>
</dbReference>
<dbReference type="PDBsum" id="3OAM"/>
<dbReference type="SMR" id="Q9KQX2"/>
<dbReference type="STRING" id="243277.VC_1875"/>
<dbReference type="DNASU" id="2613629"/>
<dbReference type="EnsemblBacteria" id="AAF95023">
    <property type="protein sequence ID" value="AAF95023"/>
    <property type="gene ID" value="VC_1875"/>
</dbReference>
<dbReference type="KEGG" id="vch:VC_1875"/>
<dbReference type="PATRIC" id="fig|243277.26.peg.1791"/>
<dbReference type="eggNOG" id="COG1212">
    <property type="taxonomic scope" value="Bacteria"/>
</dbReference>
<dbReference type="HOGENOM" id="CLU_065038_1_0_6"/>
<dbReference type="BRENDA" id="2.7.7.38">
    <property type="organism ID" value="6626"/>
</dbReference>
<dbReference type="UniPathway" id="UPA00030"/>
<dbReference type="UniPathway" id="UPA00358">
    <property type="reaction ID" value="UER00476"/>
</dbReference>
<dbReference type="EvolutionaryTrace" id="Q9KQX2"/>
<dbReference type="Proteomes" id="UP000000584">
    <property type="component" value="Chromosome 1"/>
</dbReference>
<dbReference type="GO" id="GO:0005829">
    <property type="term" value="C:cytosol"/>
    <property type="evidence" value="ECO:0000318"/>
    <property type="project" value="GO_Central"/>
</dbReference>
<dbReference type="GO" id="GO:0008690">
    <property type="term" value="F:3-deoxy-manno-octulosonate cytidylyltransferase activity"/>
    <property type="evidence" value="ECO:0000318"/>
    <property type="project" value="GO_Central"/>
</dbReference>
<dbReference type="GO" id="GO:0033468">
    <property type="term" value="P:CMP-keto-3-deoxy-D-manno-octulosonic acid biosynthetic process"/>
    <property type="evidence" value="ECO:0007669"/>
    <property type="project" value="UniProtKB-UniRule"/>
</dbReference>
<dbReference type="GO" id="GO:0009103">
    <property type="term" value="P:lipopolysaccharide biosynthetic process"/>
    <property type="evidence" value="ECO:0007669"/>
    <property type="project" value="UniProtKB-UniRule"/>
</dbReference>
<dbReference type="CDD" id="cd02517">
    <property type="entry name" value="CMP-KDO-Synthetase"/>
    <property type="match status" value="1"/>
</dbReference>
<dbReference type="FunFam" id="3.90.550.10:FF:000011">
    <property type="entry name" value="3-deoxy-manno-octulosonate cytidylyltransferase"/>
    <property type="match status" value="1"/>
</dbReference>
<dbReference type="Gene3D" id="3.90.550.10">
    <property type="entry name" value="Spore Coat Polysaccharide Biosynthesis Protein SpsA, Chain A"/>
    <property type="match status" value="1"/>
</dbReference>
<dbReference type="HAMAP" id="MF_00057">
    <property type="entry name" value="KdsB"/>
    <property type="match status" value="1"/>
</dbReference>
<dbReference type="InterPro" id="IPR003329">
    <property type="entry name" value="Cytidylyl_trans"/>
</dbReference>
<dbReference type="InterPro" id="IPR004528">
    <property type="entry name" value="KdsB"/>
</dbReference>
<dbReference type="InterPro" id="IPR029044">
    <property type="entry name" value="Nucleotide-diphossugar_trans"/>
</dbReference>
<dbReference type="NCBIfam" id="TIGR00466">
    <property type="entry name" value="kdsB"/>
    <property type="match status" value="1"/>
</dbReference>
<dbReference type="NCBIfam" id="NF003950">
    <property type="entry name" value="PRK05450.1-3"/>
    <property type="match status" value="1"/>
</dbReference>
<dbReference type="NCBIfam" id="NF003952">
    <property type="entry name" value="PRK05450.1-5"/>
    <property type="match status" value="1"/>
</dbReference>
<dbReference type="NCBIfam" id="NF009905">
    <property type="entry name" value="PRK13368.1"/>
    <property type="match status" value="1"/>
</dbReference>
<dbReference type="PANTHER" id="PTHR42866">
    <property type="entry name" value="3-DEOXY-MANNO-OCTULOSONATE CYTIDYLYLTRANSFERASE"/>
    <property type="match status" value="1"/>
</dbReference>
<dbReference type="PANTHER" id="PTHR42866:SF2">
    <property type="entry name" value="3-DEOXY-MANNO-OCTULOSONATE CYTIDYLYLTRANSFERASE, MITOCHONDRIAL"/>
    <property type="match status" value="1"/>
</dbReference>
<dbReference type="Pfam" id="PF02348">
    <property type="entry name" value="CTP_transf_3"/>
    <property type="match status" value="1"/>
</dbReference>
<dbReference type="SUPFAM" id="SSF53448">
    <property type="entry name" value="Nucleotide-diphospho-sugar transferases"/>
    <property type="match status" value="1"/>
</dbReference>
<evidence type="ECO:0000255" key="1">
    <source>
        <dbReference type="HAMAP-Rule" id="MF_00057"/>
    </source>
</evidence>
<evidence type="ECO:0007829" key="2">
    <source>
        <dbReference type="PDB" id="3OAM"/>
    </source>
</evidence>
<proteinExistence type="evidence at protein level"/>
<accession>Q9KQX2</accession>
<keyword id="KW-0002">3D-structure</keyword>
<keyword id="KW-0963">Cytoplasm</keyword>
<keyword id="KW-0448">Lipopolysaccharide biosynthesis</keyword>
<keyword id="KW-0548">Nucleotidyltransferase</keyword>
<keyword id="KW-1185">Reference proteome</keyword>
<keyword id="KW-0808">Transferase</keyword>
<protein>
    <recommendedName>
        <fullName evidence="1">3-deoxy-manno-octulosonate cytidylyltransferase</fullName>
        <ecNumber evidence="1">2.7.7.38</ecNumber>
    </recommendedName>
    <alternativeName>
        <fullName evidence="1">CMP-2-keto-3-deoxyoctulosonic acid synthase</fullName>
        <shortName evidence="1">CKS</shortName>
        <shortName evidence="1">CMP-KDO synthase</shortName>
    </alternativeName>
</protein>
<name>KDSB_VIBCH</name>
<comment type="function">
    <text evidence="1">Activates KDO (a required 8-carbon sugar) for incorporation into bacterial lipopolysaccharide in Gram-negative bacteria.</text>
</comment>
<comment type="catalytic activity">
    <reaction evidence="1">
        <text>3-deoxy-alpha-D-manno-oct-2-ulosonate + CTP = CMP-3-deoxy-beta-D-manno-octulosonate + diphosphate</text>
        <dbReference type="Rhea" id="RHEA:23448"/>
        <dbReference type="ChEBI" id="CHEBI:33019"/>
        <dbReference type="ChEBI" id="CHEBI:37563"/>
        <dbReference type="ChEBI" id="CHEBI:85986"/>
        <dbReference type="ChEBI" id="CHEBI:85987"/>
        <dbReference type="EC" id="2.7.7.38"/>
    </reaction>
</comment>
<comment type="pathway">
    <text evidence="1">Nucleotide-sugar biosynthesis; CMP-3-deoxy-D-manno-octulosonate biosynthesis; CMP-3-deoxy-D-manno-octulosonate from 3-deoxy-D-manno-octulosonate and CTP: step 1/1.</text>
</comment>
<comment type="pathway">
    <text evidence="1">Bacterial outer membrane biogenesis; lipopolysaccharide biosynthesis.</text>
</comment>
<comment type="subcellular location">
    <subcellularLocation>
        <location evidence="1">Cytoplasm</location>
    </subcellularLocation>
</comment>
<comment type="similarity">
    <text evidence="1">Belongs to the KdsB family.</text>
</comment>
<reference key="1">
    <citation type="journal article" date="2000" name="Nature">
        <title>DNA sequence of both chromosomes of the cholera pathogen Vibrio cholerae.</title>
        <authorList>
            <person name="Heidelberg J.F."/>
            <person name="Eisen J.A."/>
            <person name="Nelson W.C."/>
            <person name="Clayton R.A."/>
            <person name="Gwinn M.L."/>
            <person name="Dodson R.J."/>
            <person name="Haft D.H."/>
            <person name="Hickey E.K."/>
            <person name="Peterson J.D."/>
            <person name="Umayam L.A."/>
            <person name="Gill S.R."/>
            <person name="Nelson K.E."/>
            <person name="Read T.D."/>
            <person name="Tettelin H."/>
            <person name="Richardson D.L."/>
            <person name="Ermolaeva M.D."/>
            <person name="Vamathevan J.J."/>
            <person name="Bass S."/>
            <person name="Qin H."/>
            <person name="Dragoi I."/>
            <person name="Sellers P."/>
            <person name="McDonald L.A."/>
            <person name="Utterback T.R."/>
            <person name="Fleischmann R.D."/>
            <person name="Nierman W.C."/>
            <person name="White O."/>
            <person name="Salzberg S.L."/>
            <person name="Smith H.O."/>
            <person name="Colwell R.R."/>
            <person name="Mekalanos J.J."/>
            <person name="Venter J.C."/>
            <person name="Fraser C.M."/>
        </authorList>
    </citation>
    <scope>NUCLEOTIDE SEQUENCE [LARGE SCALE GENOMIC DNA]</scope>
    <source>
        <strain>ATCC 39315 / El Tor Inaba N16961</strain>
    </source>
</reference>